<name>RL17_THEMA</name>
<gene>
    <name evidence="1" type="primary">rplQ</name>
    <name type="ordered locus">TM_1471</name>
</gene>
<feature type="chain" id="PRO_0000175546" description="Large ribosomal subunit protein bL17">
    <location>
        <begin position="1"/>
        <end position="131"/>
    </location>
</feature>
<organism>
    <name type="scientific">Thermotoga maritima (strain ATCC 43589 / DSM 3109 / JCM 10099 / NBRC 100826 / MSB8)</name>
    <dbReference type="NCBI Taxonomy" id="243274"/>
    <lineage>
        <taxon>Bacteria</taxon>
        <taxon>Thermotogati</taxon>
        <taxon>Thermotogota</taxon>
        <taxon>Thermotogae</taxon>
        <taxon>Thermotogales</taxon>
        <taxon>Thermotogaceae</taxon>
        <taxon>Thermotoga</taxon>
    </lineage>
</organism>
<keyword id="KW-1185">Reference proteome</keyword>
<keyword id="KW-0687">Ribonucleoprotein</keyword>
<keyword id="KW-0689">Ribosomal protein</keyword>
<comment type="subunit">
    <text evidence="1">Part of the 50S ribosomal subunit. Contacts protein L32.</text>
</comment>
<comment type="similarity">
    <text evidence="1">Belongs to the bacterial ribosomal protein bL17 family.</text>
</comment>
<protein>
    <recommendedName>
        <fullName evidence="1">Large ribosomal subunit protein bL17</fullName>
    </recommendedName>
    <alternativeName>
        <fullName evidence="2">50S ribosomal protein L17</fullName>
    </alternativeName>
</protein>
<accession>Q9X1I1</accession>
<sequence length="131" mass="14820">MRHRVKRHKLGRYGSHRKSLLRNLSREIVEHGSIVTTTAKAKALKTFMDKLVSKAIEAATTDDRARSVHLRRQINAVLGDRRLTNKLVDEIAKNYVGRRGGYVRVLRIGFRRGDAAEMSLVQLVEASSQEG</sequence>
<reference key="1">
    <citation type="journal article" date="1999" name="Nature">
        <title>Evidence for lateral gene transfer between Archaea and Bacteria from genome sequence of Thermotoga maritima.</title>
        <authorList>
            <person name="Nelson K.E."/>
            <person name="Clayton R.A."/>
            <person name="Gill S.R."/>
            <person name="Gwinn M.L."/>
            <person name="Dodson R.J."/>
            <person name="Haft D.H."/>
            <person name="Hickey E.K."/>
            <person name="Peterson J.D."/>
            <person name="Nelson W.C."/>
            <person name="Ketchum K.A."/>
            <person name="McDonald L.A."/>
            <person name="Utterback T.R."/>
            <person name="Malek J.A."/>
            <person name="Linher K.D."/>
            <person name="Garrett M.M."/>
            <person name="Stewart A.M."/>
            <person name="Cotton M.D."/>
            <person name="Pratt M.S."/>
            <person name="Phillips C.A."/>
            <person name="Richardson D.L."/>
            <person name="Heidelberg J.F."/>
            <person name="Sutton G.G."/>
            <person name="Fleischmann R.D."/>
            <person name="Eisen J.A."/>
            <person name="White O."/>
            <person name="Salzberg S.L."/>
            <person name="Smith H.O."/>
            <person name="Venter J.C."/>
            <person name="Fraser C.M."/>
        </authorList>
    </citation>
    <scope>NUCLEOTIDE SEQUENCE [LARGE SCALE GENOMIC DNA]</scope>
    <source>
        <strain>ATCC 43589 / DSM 3109 / JCM 10099 / NBRC 100826 / MSB8</strain>
    </source>
</reference>
<dbReference type="EMBL" id="AE000512">
    <property type="protein sequence ID" value="AAD36539.1"/>
    <property type="molecule type" value="Genomic_DNA"/>
</dbReference>
<dbReference type="PIR" id="H72246">
    <property type="entry name" value="H72246"/>
</dbReference>
<dbReference type="RefSeq" id="NP_229271.1">
    <property type="nucleotide sequence ID" value="NC_000853.1"/>
</dbReference>
<dbReference type="RefSeq" id="WP_004081777.1">
    <property type="nucleotide sequence ID" value="NZ_CP011107.1"/>
</dbReference>
<dbReference type="SMR" id="Q9X1I1"/>
<dbReference type="FunCoup" id="Q9X1I1">
    <property type="interactions" value="342"/>
</dbReference>
<dbReference type="STRING" id="243274.TM_1471"/>
<dbReference type="PaxDb" id="243274-THEMA_06945"/>
<dbReference type="EnsemblBacteria" id="AAD36539">
    <property type="protein sequence ID" value="AAD36539"/>
    <property type="gene ID" value="TM_1471"/>
</dbReference>
<dbReference type="KEGG" id="tma:TM1471"/>
<dbReference type="KEGG" id="tmi:THEMA_06945"/>
<dbReference type="KEGG" id="tmm:Tmari_1479"/>
<dbReference type="KEGG" id="tmw:THMA_1503"/>
<dbReference type="eggNOG" id="COG0203">
    <property type="taxonomic scope" value="Bacteria"/>
</dbReference>
<dbReference type="InParanoid" id="Q9X1I1"/>
<dbReference type="OrthoDB" id="9809073at2"/>
<dbReference type="Proteomes" id="UP000008183">
    <property type="component" value="Chromosome"/>
</dbReference>
<dbReference type="GO" id="GO:0022625">
    <property type="term" value="C:cytosolic large ribosomal subunit"/>
    <property type="evidence" value="ECO:0000318"/>
    <property type="project" value="GO_Central"/>
</dbReference>
<dbReference type="GO" id="GO:0003735">
    <property type="term" value="F:structural constituent of ribosome"/>
    <property type="evidence" value="ECO:0000318"/>
    <property type="project" value="GO_Central"/>
</dbReference>
<dbReference type="GO" id="GO:0006412">
    <property type="term" value="P:translation"/>
    <property type="evidence" value="ECO:0007669"/>
    <property type="project" value="UniProtKB-UniRule"/>
</dbReference>
<dbReference type="FunFam" id="3.90.1030.10:FF:000016">
    <property type="entry name" value="50S ribosomal protein L17"/>
    <property type="match status" value="1"/>
</dbReference>
<dbReference type="Gene3D" id="3.90.1030.10">
    <property type="entry name" value="Ribosomal protein L17"/>
    <property type="match status" value="1"/>
</dbReference>
<dbReference type="HAMAP" id="MF_01368">
    <property type="entry name" value="Ribosomal_bL17"/>
    <property type="match status" value="1"/>
</dbReference>
<dbReference type="InterPro" id="IPR000456">
    <property type="entry name" value="Ribosomal_bL17"/>
</dbReference>
<dbReference type="InterPro" id="IPR036373">
    <property type="entry name" value="Ribosomal_bL17_sf"/>
</dbReference>
<dbReference type="NCBIfam" id="TIGR00059">
    <property type="entry name" value="L17"/>
    <property type="match status" value="1"/>
</dbReference>
<dbReference type="PANTHER" id="PTHR14413:SF16">
    <property type="entry name" value="LARGE RIBOSOMAL SUBUNIT PROTEIN BL17M"/>
    <property type="match status" value="1"/>
</dbReference>
<dbReference type="PANTHER" id="PTHR14413">
    <property type="entry name" value="RIBOSOMAL PROTEIN L17"/>
    <property type="match status" value="1"/>
</dbReference>
<dbReference type="Pfam" id="PF01196">
    <property type="entry name" value="Ribosomal_L17"/>
    <property type="match status" value="1"/>
</dbReference>
<dbReference type="SUPFAM" id="SSF64263">
    <property type="entry name" value="Prokaryotic ribosomal protein L17"/>
    <property type="match status" value="1"/>
</dbReference>
<evidence type="ECO:0000255" key="1">
    <source>
        <dbReference type="HAMAP-Rule" id="MF_01368"/>
    </source>
</evidence>
<evidence type="ECO:0000305" key="2"/>
<proteinExistence type="inferred from homology"/>